<accession>Q9SR96</accession>
<evidence type="ECO:0000255" key="1"/>
<evidence type="ECO:0000255" key="2">
    <source>
        <dbReference type="PROSITE-ProRule" id="PRU00286"/>
    </source>
</evidence>
<evidence type="ECO:0000256" key="3">
    <source>
        <dbReference type="SAM" id="MobiDB-lite"/>
    </source>
</evidence>
<evidence type="ECO:0000269" key="4">
    <source>
    </source>
</evidence>
<evidence type="ECO:0000269" key="5">
    <source>
    </source>
</evidence>
<evidence type="ECO:0000269" key="6">
    <source>
    </source>
</evidence>
<evidence type="ECO:0000305" key="7">
    <source>
    </source>
</evidence>
<reference key="1">
    <citation type="journal article" date="2000" name="Nature">
        <title>Sequence and analysis of chromosome 3 of the plant Arabidopsis thaliana.</title>
        <authorList>
            <person name="Salanoubat M."/>
            <person name="Lemcke K."/>
            <person name="Rieger M."/>
            <person name="Ansorge W."/>
            <person name="Unseld M."/>
            <person name="Fartmann B."/>
            <person name="Valle G."/>
            <person name="Bloecker H."/>
            <person name="Perez-Alonso M."/>
            <person name="Obermaier B."/>
            <person name="Delseny M."/>
            <person name="Boutry M."/>
            <person name="Grivell L.A."/>
            <person name="Mache R."/>
            <person name="Puigdomenech P."/>
            <person name="De Simone V."/>
            <person name="Choisne N."/>
            <person name="Artiguenave F."/>
            <person name="Robert C."/>
            <person name="Brottier P."/>
            <person name="Wincker P."/>
            <person name="Cattolico L."/>
            <person name="Weissenbach J."/>
            <person name="Saurin W."/>
            <person name="Quetier F."/>
            <person name="Schaefer M."/>
            <person name="Mueller-Auer S."/>
            <person name="Gabel C."/>
            <person name="Fuchs M."/>
            <person name="Benes V."/>
            <person name="Wurmbach E."/>
            <person name="Drzonek H."/>
            <person name="Erfle H."/>
            <person name="Jordan N."/>
            <person name="Bangert S."/>
            <person name="Wiedelmann R."/>
            <person name="Kranz H."/>
            <person name="Voss H."/>
            <person name="Holland R."/>
            <person name="Brandt P."/>
            <person name="Nyakatura G."/>
            <person name="Vezzi A."/>
            <person name="D'Angelo M."/>
            <person name="Pallavicini A."/>
            <person name="Toppo S."/>
            <person name="Simionati B."/>
            <person name="Conrad A."/>
            <person name="Hornischer K."/>
            <person name="Kauer G."/>
            <person name="Loehnert T.-H."/>
            <person name="Nordsiek G."/>
            <person name="Reichelt J."/>
            <person name="Scharfe M."/>
            <person name="Schoen O."/>
            <person name="Bargues M."/>
            <person name="Terol J."/>
            <person name="Climent J."/>
            <person name="Navarro P."/>
            <person name="Collado C."/>
            <person name="Perez-Perez A."/>
            <person name="Ottenwaelder B."/>
            <person name="Duchemin D."/>
            <person name="Cooke R."/>
            <person name="Laudie M."/>
            <person name="Berger-Llauro C."/>
            <person name="Purnelle B."/>
            <person name="Masuy D."/>
            <person name="de Haan M."/>
            <person name="Maarse A.C."/>
            <person name="Alcaraz J.-P."/>
            <person name="Cottet A."/>
            <person name="Casacuberta E."/>
            <person name="Monfort A."/>
            <person name="Argiriou A."/>
            <person name="Flores M."/>
            <person name="Liguori R."/>
            <person name="Vitale D."/>
            <person name="Mannhaupt G."/>
            <person name="Haase D."/>
            <person name="Schoof H."/>
            <person name="Rudd S."/>
            <person name="Zaccaria P."/>
            <person name="Mewes H.-W."/>
            <person name="Mayer K.F.X."/>
            <person name="Kaul S."/>
            <person name="Town C.D."/>
            <person name="Koo H.L."/>
            <person name="Tallon L.J."/>
            <person name="Jenkins J."/>
            <person name="Rooney T."/>
            <person name="Rizzo M."/>
            <person name="Walts A."/>
            <person name="Utterback T."/>
            <person name="Fujii C.Y."/>
            <person name="Shea T.P."/>
            <person name="Creasy T.H."/>
            <person name="Haas B."/>
            <person name="Maiti R."/>
            <person name="Wu D."/>
            <person name="Peterson J."/>
            <person name="Van Aken S."/>
            <person name="Pai G."/>
            <person name="Militscher J."/>
            <person name="Sellers P."/>
            <person name="Gill J.E."/>
            <person name="Feldblyum T.V."/>
            <person name="Preuss D."/>
            <person name="Lin X."/>
            <person name="Nierman W.C."/>
            <person name="Salzberg S.L."/>
            <person name="White O."/>
            <person name="Venter J.C."/>
            <person name="Fraser C.M."/>
            <person name="Kaneko T."/>
            <person name="Nakamura Y."/>
            <person name="Sato S."/>
            <person name="Kato T."/>
            <person name="Asamizu E."/>
            <person name="Sasamoto S."/>
            <person name="Kimura T."/>
            <person name="Idesawa K."/>
            <person name="Kawashima K."/>
            <person name="Kishida Y."/>
            <person name="Kiyokawa C."/>
            <person name="Kohara M."/>
            <person name="Matsumoto M."/>
            <person name="Matsuno A."/>
            <person name="Muraki A."/>
            <person name="Nakayama S."/>
            <person name="Nakazaki N."/>
            <person name="Shinpo S."/>
            <person name="Takeuchi C."/>
            <person name="Wada T."/>
            <person name="Watanabe A."/>
            <person name="Yamada M."/>
            <person name="Yasuda M."/>
            <person name="Tabata S."/>
        </authorList>
    </citation>
    <scope>NUCLEOTIDE SEQUENCE [LARGE SCALE GENOMIC DNA]</scope>
    <source>
        <strain>cv. Columbia</strain>
    </source>
</reference>
<reference key="2">
    <citation type="journal article" date="2017" name="Plant J.">
        <title>Araport11: a complete reannotation of the Arabidopsis thaliana reference genome.</title>
        <authorList>
            <person name="Cheng C.Y."/>
            <person name="Krishnakumar V."/>
            <person name="Chan A.P."/>
            <person name="Thibaud-Nissen F."/>
            <person name="Schobel S."/>
            <person name="Town C.D."/>
        </authorList>
    </citation>
    <scope>GENOME REANNOTATION</scope>
    <source>
        <strain>cv. Columbia</strain>
    </source>
</reference>
<reference key="3">
    <citation type="journal article" date="2003" name="Science">
        <title>Empirical analysis of transcriptional activity in the Arabidopsis genome.</title>
        <authorList>
            <person name="Yamada K."/>
            <person name="Lim J."/>
            <person name="Dale J.M."/>
            <person name="Chen H."/>
            <person name="Shinn P."/>
            <person name="Palm C.J."/>
            <person name="Southwick A.M."/>
            <person name="Wu H.C."/>
            <person name="Kim C.J."/>
            <person name="Nguyen M."/>
            <person name="Pham P.K."/>
            <person name="Cheuk R.F."/>
            <person name="Karlin-Newmann G."/>
            <person name="Liu S.X."/>
            <person name="Lam B."/>
            <person name="Sakano H."/>
            <person name="Wu T."/>
            <person name="Yu G."/>
            <person name="Miranda M."/>
            <person name="Quach H.L."/>
            <person name="Tripp M."/>
            <person name="Chang C.H."/>
            <person name="Lee J.M."/>
            <person name="Toriumi M.J."/>
            <person name="Chan M.M."/>
            <person name="Tang C.C."/>
            <person name="Onodera C.S."/>
            <person name="Deng J.M."/>
            <person name="Akiyama K."/>
            <person name="Ansari Y."/>
            <person name="Arakawa T."/>
            <person name="Banh J."/>
            <person name="Banno F."/>
            <person name="Bowser L."/>
            <person name="Brooks S.Y."/>
            <person name="Carninci P."/>
            <person name="Chao Q."/>
            <person name="Choy N."/>
            <person name="Enju A."/>
            <person name="Goldsmith A.D."/>
            <person name="Gurjal M."/>
            <person name="Hansen N.F."/>
            <person name="Hayashizaki Y."/>
            <person name="Johnson-Hopson C."/>
            <person name="Hsuan V.W."/>
            <person name="Iida K."/>
            <person name="Karnes M."/>
            <person name="Khan S."/>
            <person name="Koesema E."/>
            <person name="Ishida J."/>
            <person name="Jiang P.X."/>
            <person name="Jones T."/>
            <person name="Kawai J."/>
            <person name="Kamiya A."/>
            <person name="Meyers C."/>
            <person name="Nakajima M."/>
            <person name="Narusaka M."/>
            <person name="Seki M."/>
            <person name="Sakurai T."/>
            <person name="Satou M."/>
            <person name="Tamse R."/>
            <person name="Vaysberg M."/>
            <person name="Wallender E.K."/>
            <person name="Wong C."/>
            <person name="Yamamura Y."/>
            <person name="Yuan S."/>
            <person name="Shinozaki K."/>
            <person name="Davis R.W."/>
            <person name="Theologis A."/>
            <person name="Ecker J.R."/>
        </authorList>
    </citation>
    <scope>NUCLEOTIDE SEQUENCE [LARGE SCALE MRNA]</scope>
    <source>
        <strain>cv. Columbia</strain>
    </source>
</reference>
<reference key="4">
    <citation type="journal article" date="2001" name="Cell Stress Chaperones">
        <title>The J-domain proteins of Arabidopsis thaliana: an unexpectedly large and diverse family of chaperones.</title>
        <authorList>
            <person name="Miernyk J.A."/>
        </authorList>
    </citation>
    <scope>GENE FAMILY</scope>
    <scope>NOMENCLATURE</scope>
</reference>
<reference key="5">
    <citation type="journal article" date="2008" name="Plant Cell Physiol.">
        <title>Arabidopsis thaliana has a set of J proteins in the endoplasmic reticulum that are conserved from yeast to animals and plants.</title>
        <authorList>
            <person name="Yamamoto M."/>
            <person name="Maruyama D."/>
            <person name="Endo T."/>
            <person name="Nishikawa S."/>
        </authorList>
    </citation>
    <scope>SUBCELLULAR LOCATION</scope>
    <scope>TISSUE SPECIFICITY</scope>
    <scope>INDUCTION BY TUNICAMYCIN</scope>
    <scope>LACK OF GLYCOSYLATION</scope>
    <scope>DISRUPTION PHENOTYPE</scope>
</reference>
<reference key="6">
    <citation type="journal article" date="2009" name="Plant J.">
        <title>A mutation in thermosensitive male sterile 1, encoding a heat shock protein with DnaJ and PDI domains, leads to thermosensitive gametophytic male sterility in Arabidopsis.</title>
        <authorList>
            <person name="Yang K.Z."/>
            <person name="Xia C."/>
            <person name="Liu X.L."/>
            <person name="Dou X.Y."/>
            <person name="Wang W."/>
            <person name="Chen L.Q."/>
            <person name="Zhang X.Q."/>
            <person name="Xie L.F."/>
            <person name="He L."/>
            <person name="Ma X."/>
            <person name="Ye D."/>
        </authorList>
    </citation>
    <scope>FUNCTION</scope>
    <scope>TISSUE SPECIFICITY</scope>
    <scope>INDUCTION BY HEAT SHOCK</scope>
    <scope>DISRUPTION PHENOTYPE</scope>
</reference>
<reference key="7">
    <citation type="journal article" date="2015" name="PLoS ONE">
        <title>The THERMOSENSITIVE MALE STERILE 1 interacts with the BiPs via DnaJ domain and stimulates their ATPase enzyme activities in Arabidopsis.</title>
        <authorList>
            <person name="Ma Z.X."/>
            <person name="Leng Y.J."/>
            <person name="Chen G.X."/>
            <person name="Zhou P.M."/>
            <person name="Ye D."/>
            <person name="Chen L.Q."/>
        </authorList>
    </citation>
    <scope>INTERACTION WITH BIP1 AND BIP3</scope>
    <scope>INDUCTION</scope>
</reference>
<protein>
    <recommendedName>
        <fullName>DnaJ protein ERDJ3A</fullName>
    </recommendedName>
    <alternativeName>
        <fullName>Chaperone protein dnaJ 63</fullName>
        <shortName>AtDjA63</shortName>
        <shortName>AtJ63</shortName>
    </alternativeName>
    <alternativeName>
        <fullName>Endoplasmic reticulum dnaJ domain-containing protein 3A</fullName>
        <shortName>AtERdj3A</shortName>
    </alternativeName>
    <alternativeName>
        <fullName>Protein SCJ1 homolog ERDJ3A</fullName>
    </alternativeName>
    <alternativeName>
        <fullName>Protein THERMOSENSITIVE MALE STERILE 1</fullName>
    </alternativeName>
</protein>
<keyword id="KW-0143">Chaperone</keyword>
<keyword id="KW-0175">Coiled coil</keyword>
<keyword id="KW-0256">Endoplasmic reticulum</keyword>
<keyword id="KW-0325">Glycoprotein</keyword>
<keyword id="KW-1185">Reference proteome</keyword>
<keyword id="KW-0732">Signal</keyword>
<gene>
    <name type="primary">ERDJ3A</name>
    <name type="synonym">A63</name>
    <name type="synonym">TMS1</name>
    <name type="ordered locus">At3g08970</name>
    <name type="ORF">T16O11.7</name>
</gene>
<comment type="function">
    <text evidence="5">Regulates protein folding in the endoplasmic reticulum (ER) lumen. Functions probably as a co-molecular chaperone that is required for normal growth of pollen tubes under high-temperature stress.</text>
</comment>
<comment type="subunit">
    <text evidence="6">Interacts with BIP1 and BIP3 (PubMed:26186593). The interaction with BIP1 and BIP3 activates the ATPase enzyme activities of BIP1 and BIP3 (PubMed:26186593).</text>
</comment>
<comment type="subcellular location">
    <subcellularLocation>
        <location evidence="7">Endoplasmic reticulum lumen</location>
    </subcellularLocation>
</comment>
<comment type="tissue specificity">
    <text evidence="4 5">Expressed in roots, leaves, stems, flowers, mature pollen grains and growing pollen tubes.</text>
</comment>
<comment type="induction">
    <text evidence="4 5 6">Induced by tunicamycin and heat shock (PubMed:18718935, PubMed:18980646). Induced by DTT and azetidine-2-carboxylate (PubMed:26186593).</text>
</comment>
<comment type="PTM">
    <text>Not N-glycosylated.</text>
</comment>
<comment type="disruption phenotype">
    <text evidence="4 5">No visible phenotype under normal growth conditions (permissive temperature of 22 degrees Celsius), but mutant plants show gametophytic male sterility due to defect in pollen tube growth at temperature of 30 degrees Celsius.</text>
</comment>
<feature type="signal peptide" evidence="1">
    <location>
        <begin position="1"/>
        <end position="23"/>
    </location>
</feature>
<feature type="chain" id="PRO_0000430368" description="DnaJ protein ERDJ3A">
    <location>
        <begin position="24"/>
        <end position="572"/>
    </location>
</feature>
<feature type="domain" description="J" evidence="2">
    <location>
        <begin position="27"/>
        <end position="91"/>
    </location>
</feature>
<feature type="region of interest" description="Disordered" evidence="3">
    <location>
        <begin position="419"/>
        <end position="439"/>
    </location>
</feature>
<feature type="coiled-coil region" evidence="1">
    <location>
        <begin position="394"/>
        <end position="423"/>
    </location>
</feature>
<feature type="compositionally biased region" description="Polar residues" evidence="3">
    <location>
        <begin position="422"/>
        <end position="432"/>
    </location>
</feature>
<feature type="glycosylation site" description="N-linked (GlcNAc...) asparagine" evidence="1">
    <location>
        <position position="431"/>
    </location>
</feature>
<name>DNJ63_ARATH</name>
<organism>
    <name type="scientific">Arabidopsis thaliana</name>
    <name type="common">Mouse-ear cress</name>
    <dbReference type="NCBI Taxonomy" id="3702"/>
    <lineage>
        <taxon>Eukaryota</taxon>
        <taxon>Viridiplantae</taxon>
        <taxon>Streptophyta</taxon>
        <taxon>Embryophyta</taxon>
        <taxon>Tracheophyta</taxon>
        <taxon>Spermatophyta</taxon>
        <taxon>Magnoliopsida</taxon>
        <taxon>eudicotyledons</taxon>
        <taxon>Gunneridae</taxon>
        <taxon>Pentapetalae</taxon>
        <taxon>rosids</taxon>
        <taxon>malvids</taxon>
        <taxon>Brassicales</taxon>
        <taxon>Brassicaceae</taxon>
        <taxon>Camelineae</taxon>
        <taxon>Arabidopsis</taxon>
    </lineage>
</organism>
<dbReference type="EMBL" id="AC010871">
    <property type="protein sequence ID" value="AAF07843.1"/>
    <property type="molecule type" value="Genomic_DNA"/>
</dbReference>
<dbReference type="EMBL" id="CP002686">
    <property type="protein sequence ID" value="AEE74703.1"/>
    <property type="molecule type" value="Genomic_DNA"/>
</dbReference>
<dbReference type="EMBL" id="CP002686">
    <property type="protein sequence ID" value="ANM65503.1"/>
    <property type="molecule type" value="Genomic_DNA"/>
</dbReference>
<dbReference type="EMBL" id="BT003887">
    <property type="protein sequence ID" value="AAO41936.1"/>
    <property type="molecule type" value="mRNA"/>
</dbReference>
<dbReference type="EMBL" id="BT005001">
    <property type="protein sequence ID" value="AAO50534.1"/>
    <property type="molecule type" value="mRNA"/>
</dbReference>
<dbReference type="RefSeq" id="NP_001319504.1">
    <property type="nucleotide sequence ID" value="NM_001337788.1"/>
</dbReference>
<dbReference type="RefSeq" id="NP_187509.1">
    <property type="nucleotide sequence ID" value="NM_111731.4"/>
</dbReference>
<dbReference type="SMR" id="Q9SR96"/>
<dbReference type="BioGRID" id="5383">
    <property type="interactions" value="4"/>
</dbReference>
<dbReference type="FunCoup" id="Q9SR96">
    <property type="interactions" value="4"/>
</dbReference>
<dbReference type="IntAct" id="Q9SR96">
    <property type="interactions" value="3"/>
</dbReference>
<dbReference type="MINT" id="Q9SR96"/>
<dbReference type="STRING" id="3702.Q9SR96"/>
<dbReference type="GlyCosmos" id="Q9SR96">
    <property type="glycosylation" value="1 site, No reported glycans"/>
</dbReference>
<dbReference type="GlyGen" id="Q9SR96">
    <property type="glycosylation" value="1 site"/>
</dbReference>
<dbReference type="iPTMnet" id="Q9SR96"/>
<dbReference type="PaxDb" id="3702-AT3G08970.1"/>
<dbReference type="ProteomicsDB" id="222608"/>
<dbReference type="EnsemblPlants" id="AT3G08970.1">
    <property type="protein sequence ID" value="AT3G08970.1"/>
    <property type="gene ID" value="AT3G08970"/>
</dbReference>
<dbReference type="EnsemblPlants" id="AT3G08970.2">
    <property type="protein sequence ID" value="AT3G08970.2"/>
    <property type="gene ID" value="AT3G08970"/>
</dbReference>
<dbReference type="GeneID" id="820049"/>
<dbReference type="Gramene" id="AT3G08970.1">
    <property type="protein sequence ID" value="AT3G08970.1"/>
    <property type="gene ID" value="AT3G08970"/>
</dbReference>
<dbReference type="Gramene" id="AT3G08970.2">
    <property type="protein sequence ID" value="AT3G08970.2"/>
    <property type="gene ID" value="AT3G08970"/>
</dbReference>
<dbReference type="KEGG" id="ath:AT3G08970"/>
<dbReference type="Araport" id="AT3G08970"/>
<dbReference type="TAIR" id="AT3G08970">
    <property type="gene designation" value="ATERDJ3A"/>
</dbReference>
<dbReference type="eggNOG" id="KOG0714">
    <property type="taxonomic scope" value="Eukaryota"/>
</dbReference>
<dbReference type="HOGENOM" id="CLU_035865_0_0_1"/>
<dbReference type="InParanoid" id="Q9SR96"/>
<dbReference type="OMA" id="FFISYND"/>
<dbReference type="PhylomeDB" id="Q9SR96"/>
<dbReference type="PRO" id="PR:Q9SR96"/>
<dbReference type="Proteomes" id="UP000006548">
    <property type="component" value="Chromosome 3"/>
</dbReference>
<dbReference type="ExpressionAtlas" id="Q9SR96">
    <property type="expression patterns" value="baseline and differential"/>
</dbReference>
<dbReference type="GO" id="GO:0005788">
    <property type="term" value="C:endoplasmic reticulum lumen"/>
    <property type="evidence" value="ECO:0000314"/>
    <property type="project" value="TAIR"/>
</dbReference>
<dbReference type="GO" id="GO:0009506">
    <property type="term" value="C:plasmodesma"/>
    <property type="evidence" value="ECO:0007005"/>
    <property type="project" value="TAIR"/>
</dbReference>
<dbReference type="GO" id="GO:0016491">
    <property type="term" value="F:oxidoreductase activity"/>
    <property type="evidence" value="ECO:0000314"/>
    <property type="project" value="TAIR"/>
</dbReference>
<dbReference type="GO" id="GO:0034605">
    <property type="term" value="P:cellular response to heat"/>
    <property type="evidence" value="ECO:0000304"/>
    <property type="project" value="TAIR"/>
</dbReference>
<dbReference type="GO" id="GO:0009860">
    <property type="term" value="P:pollen tube growth"/>
    <property type="evidence" value="ECO:0000315"/>
    <property type="project" value="TAIR"/>
</dbReference>
<dbReference type="GO" id="GO:0009408">
    <property type="term" value="P:response to heat"/>
    <property type="evidence" value="ECO:0000315"/>
    <property type="project" value="TAIR"/>
</dbReference>
<dbReference type="CDD" id="cd06257">
    <property type="entry name" value="DnaJ"/>
    <property type="match status" value="1"/>
</dbReference>
<dbReference type="Gene3D" id="1.10.287.110">
    <property type="entry name" value="DnaJ domain"/>
    <property type="match status" value="1"/>
</dbReference>
<dbReference type="Gene3D" id="3.40.30.10">
    <property type="entry name" value="Glutaredoxin"/>
    <property type="match status" value="1"/>
</dbReference>
<dbReference type="InterPro" id="IPR001623">
    <property type="entry name" value="DnaJ_domain"/>
</dbReference>
<dbReference type="InterPro" id="IPR018253">
    <property type="entry name" value="DnaJ_domain_CS"/>
</dbReference>
<dbReference type="InterPro" id="IPR052842">
    <property type="entry name" value="ER_Co-chaperone"/>
</dbReference>
<dbReference type="InterPro" id="IPR036869">
    <property type="entry name" value="J_dom_sf"/>
</dbReference>
<dbReference type="InterPro" id="IPR036249">
    <property type="entry name" value="Thioredoxin-like_sf"/>
</dbReference>
<dbReference type="PANTHER" id="PTHR45184">
    <property type="entry name" value="DNAJ PROTEIN ERDJ3A"/>
    <property type="match status" value="1"/>
</dbReference>
<dbReference type="PANTHER" id="PTHR45184:SF1">
    <property type="entry name" value="DNAJ PROTEIN ERDJ3A"/>
    <property type="match status" value="1"/>
</dbReference>
<dbReference type="Pfam" id="PF00226">
    <property type="entry name" value="DnaJ"/>
    <property type="match status" value="1"/>
</dbReference>
<dbReference type="PRINTS" id="PR00625">
    <property type="entry name" value="JDOMAIN"/>
</dbReference>
<dbReference type="SMART" id="SM00271">
    <property type="entry name" value="DnaJ"/>
    <property type="match status" value="1"/>
</dbReference>
<dbReference type="SUPFAM" id="SSF46565">
    <property type="entry name" value="Chaperone J-domain"/>
    <property type="match status" value="1"/>
</dbReference>
<dbReference type="SUPFAM" id="SSF52833">
    <property type="entry name" value="Thioredoxin-like"/>
    <property type="match status" value="1"/>
</dbReference>
<dbReference type="PROSITE" id="PS00636">
    <property type="entry name" value="DNAJ_1"/>
    <property type="match status" value="1"/>
</dbReference>
<dbReference type="PROSITE" id="PS50076">
    <property type="entry name" value="DNAJ_2"/>
    <property type="match status" value="1"/>
</dbReference>
<sequence>MVRTRLAISVVLVSTLLLLNVKAKSVDPYKVLGVSKDAKQREIQKAFHKQSLKYHPDKNKDKGAQEKFAEINNAYEILSDEEKRKNYDLYGDEKGQPGFDSGFPGGNGGYSYSSSGGGFNFGGPGGWQNMGGGGGSKSFSFSFGGPSESSFGFGMDDIFSMFSGGSSKGKEQFGGFGSSSNAESKSKSSTVAAIKTINSQVYKKDVVDQGMTWLLLSYLPSQRGSQYHESIIEEVAESLQGALKVGRLNCETESSLCKQLGIVPRRAPRMFVYSYTSSGKATLAEYTEELVAKKVKSFCQEHLPRFSKKIDLNTFDVSAVSSQKTPKVLLLSTKKDTPVIWRVLSGLYNGRFVFYNTEVHDTSDPKIQKLGVDKFPAIVGWLSNGEKQVLKTGITVKNLKSAVQELGKLLEGLEKKNKKVSSKSQAGQAPNESSEKIPLLSRPNFDSICGENTPVCIIGAFRSSNGKEKLQSIMSKVSQKSLSRRQASTTGSQDTVSYSLLDATKQSAFLSSLDKSEFKTSSDKLLIAYKPRRGKFATFKGDMTIEEVEKFVAAVLNGDIQFTKTRQKPQIK</sequence>
<proteinExistence type="evidence at protein level"/>